<accession>Q0SQP4</accession>
<gene>
    <name evidence="1" type="primary">rex</name>
    <name type="ordered locus">CPR_2288</name>
</gene>
<protein>
    <recommendedName>
        <fullName evidence="1">Redox-sensing transcriptional repressor Rex</fullName>
    </recommendedName>
</protein>
<proteinExistence type="inferred from homology"/>
<sequence length="212" mass="24148">MEKKKGISMAVIKRLPKYHRYLQELMENDIDRISSKELSEKIGFTASQIRQDLNCFGDFGQQGYGYNVKELYNNIGNILGLTRDYNTVIIGAGNIGQAIANYNSFNRLGFKLKGIFDANPRMFGIKIRDIEIQDVEKLKDFVKENDIEIGIICVPRTNAQKVCNELVEGGIKGIWNFAPIDLDVPKDIRVENVHLSESMMTLVYLLNHNDVK</sequence>
<comment type="function">
    <text evidence="1">Modulates transcription in response to changes in cellular NADH/NAD(+) redox state.</text>
</comment>
<comment type="subunit">
    <text evidence="1">Homodimer.</text>
</comment>
<comment type="subcellular location">
    <subcellularLocation>
        <location evidence="1">Cytoplasm</location>
    </subcellularLocation>
</comment>
<comment type="similarity">
    <text evidence="1">Belongs to the transcriptional regulatory Rex family.</text>
</comment>
<dbReference type="EMBL" id="CP000312">
    <property type="protein sequence ID" value="ABG85544.1"/>
    <property type="molecule type" value="Genomic_DNA"/>
</dbReference>
<dbReference type="RefSeq" id="WP_011593069.1">
    <property type="nucleotide sequence ID" value="NC_008262.1"/>
</dbReference>
<dbReference type="SMR" id="Q0SQP4"/>
<dbReference type="KEGG" id="cpr:CPR_2288"/>
<dbReference type="Proteomes" id="UP000001824">
    <property type="component" value="Chromosome"/>
</dbReference>
<dbReference type="GO" id="GO:0005737">
    <property type="term" value="C:cytoplasm"/>
    <property type="evidence" value="ECO:0007669"/>
    <property type="project" value="UniProtKB-SubCell"/>
</dbReference>
<dbReference type="GO" id="GO:0003677">
    <property type="term" value="F:DNA binding"/>
    <property type="evidence" value="ECO:0007669"/>
    <property type="project" value="UniProtKB-UniRule"/>
</dbReference>
<dbReference type="GO" id="GO:0003700">
    <property type="term" value="F:DNA-binding transcription factor activity"/>
    <property type="evidence" value="ECO:0007669"/>
    <property type="project" value="UniProtKB-UniRule"/>
</dbReference>
<dbReference type="GO" id="GO:0045892">
    <property type="term" value="P:negative regulation of DNA-templated transcription"/>
    <property type="evidence" value="ECO:0007669"/>
    <property type="project" value="InterPro"/>
</dbReference>
<dbReference type="GO" id="GO:0051775">
    <property type="term" value="P:response to redox state"/>
    <property type="evidence" value="ECO:0007669"/>
    <property type="project" value="InterPro"/>
</dbReference>
<dbReference type="Gene3D" id="3.40.50.720">
    <property type="entry name" value="NAD(P)-binding Rossmann-like Domain"/>
    <property type="match status" value="1"/>
</dbReference>
<dbReference type="Gene3D" id="1.10.10.10">
    <property type="entry name" value="Winged helix-like DNA-binding domain superfamily/Winged helix DNA-binding domain"/>
    <property type="match status" value="1"/>
</dbReference>
<dbReference type="HAMAP" id="MF_01131">
    <property type="entry name" value="Rex"/>
    <property type="match status" value="1"/>
</dbReference>
<dbReference type="InterPro" id="IPR003781">
    <property type="entry name" value="CoA-bd"/>
</dbReference>
<dbReference type="InterPro" id="IPR036291">
    <property type="entry name" value="NAD(P)-bd_dom_sf"/>
</dbReference>
<dbReference type="InterPro" id="IPR009718">
    <property type="entry name" value="Rex_DNA-bd_C_dom"/>
</dbReference>
<dbReference type="InterPro" id="IPR022876">
    <property type="entry name" value="Tscrpt_rep_Rex"/>
</dbReference>
<dbReference type="InterPro" id="IPR036388">
    <property type="entry name" value="WH-like_DNA-bd_sf"/>
</dbReference>
<dbReference type="InterPro" id="IPR036390">
    <property type="entry name" value="WH_DNA-bd_sf"/>
</dbReference>
<dbReference type="NCBIfam" id="NF003989">
    <property type="entry name" value="PRK05472.1-3"/>
    <property type="match status" value="1"/>
</dbReference>
<dbReference type="NCBIfam" id="NF003990">
    <property type="entry name" value="PRK05472.1-4"/>
    <property type="match status" value="1"/>
</dbReference>
<dbReference type="NCBIfam" id="NF003993">
    <property type="entry name" value="PRK05472.2-2"/>
    <property type="match status" value="1"/>
</dbReference>
<dbReference type="NCBIfam" id="NF003994">
    <property type="entry name" value="PRK05472.2-3"/>
    <property type="match status" value="1"/>
</dbReference>
<dbReference type="NCBIfam" id="NF003995">
    <property type="entry name" value="PRK05472.2-4"/>
    <property type="match status" value="1"/>
</dbReference>
<dbReference type="NCBIfam" id="NF003996">
    <property type="entry name" value="PRK05472.2-5"/>
    <property type="match status" value="1"/>
</dbReference>
<dbReference type="PANTHER" id="PTHR35786">
    <property type="entry name" value="REDOX-SENSING TRANSCRIPTIONAL REPRESSOR REX"/>
    <property type="match status" value="1"/>
</dbReference>
<dbReference type="PANTHER" id="PTHR35786:SF1">
    <property type="entry name" value="REDOX-SENSING TRANSCRIPTIONAL REPRESSOR REX 1"/>
    <property type="match status" value="1"/>
</dbReference>
<dbReference type="Pfam" id="PF02629">
    <property type="entry name" value="CoA_binding"/>
    <property type="match status" value="1"/>
</dbReference>
<dbReference type="Pfam" id="PF06971">
    <property type="entry name" value="Put_DNA-bind_N"/>
    <property type="match status" value="1"/>
</dbReference>
<dbReference type="SMART" id="SM00881">
    <property type="entry name" value="CoA_binding"/>
    <property type="match status" value="1"/>
</dbReference>
<dbReference type="SUPFAM" id="SSF51735">
    <property type="entry name" value="NAD(P)-binding Rossmann-fold domains"/>
    <property type="match status" value="1"/>
</dbReference>
<dbReference type="SUPFAM" id="SSF46785">
    <property type="entry name" value="Winged helix' DNA-binding domain"/>
    <property type="match status" value="1"/>
</dbReference>
<organism>
    <name type="scientific">Clostridium perfringens (strain SM101 / Type A)</name>
    <dbReference type="NCBI Taxonomy" id="289380"/>
    <lineage>
        <taxon>Bacteria</taxon>
        <taxon>Bacillati</taxon>
        <taxon>Bacillota</taxon>
        <taxon>Clostridia</taxon>
        <taxon>Eubacteriales</taxon>
        <taxon>Clostridiaceae</taxon>
        <taxon>Clostridium</taxon>
    </lineage>
</organism>
<keyword id="KW-0963">Cytoplasm</keyword>
<keyword id="KW-0238">DNA-binding</keyword>
<keyword id="KW-0520">NAD</keyword>
<keyword id="KW-0678">Repressor</keyword>
<keyword id="KW-0804">Transcription</keyword>
<keyword id="KW-0805">Transcription regulation</keyword>
<feature type="chain" id="PRO_1000065399" description="Redox-sensing transcriptional repressor Rex">
    <location>
        <begin position="1"/>
        <end position="212"/>
    </location>
</feature>
<feature type="DNA-binding region" description="H-T-H motif" evidence="1">
    <location>
        <begin position="17"/>
        <end position="56"/>
    </location>
</feature>
<feature type="binding site" evidence="1">
    <location>
        <begin position="91"/>
        <end position="96"/>
    </location>
    <ligand>
        <name>NAD(+)</name>
        <dbReference type="ChEBI" id="CHEBI:57540"/>
    </ligand>
</feature>
<reference key="1">
    <citation type="journal article" date="2006" name="Genome Res.">
        <title>Skewed genomic variability in strains of the toxigenic bacterial pathogen, Clostridium perfringens.</title>
        <authorList>
            <person name="Myers G.S.A."/>
            <person name="Rasko D.A."/>
            <person name="Cheung J.K."/>
            <person name="Ravel J."/>
            <person name="Seshadri R."/>
            <person name="DeBoy R.T."/>
            <person name="Ren Q."/>
            <person name="Varga J."/>
            <person name="Awad M.M."/>
            <person name="Brinkac L.M."/>
            <person name="Daugherty S.C."/>
            <person name="Haft D.H."/>
            <person name="Dodson R.J."/>
            <person name="Madupu R."/>
            <person name="Nelson W.C."/>
            <person name="Rosovitz M.J."/>
            <person name="Sullivan S.A."/>
            <person name="Khouri H."/>
            <person name="Dimitrov G.I."/>
            <person name="Watkins K.L."/>
            <person name="Mulligan S."/>
            <person name="Benton J."/>
            <person name="Radune D."/>
            <person name="Fisher D.J."/>
            <person name="Atkins H.S."/>
            <person name="Hiscox T."/>
            <person name="Jost B.H."/>
            <person name="Billington S.J."/>
            <person name="Songer J.G."/>
            <person name="McClane B.A."/>
            <person name="Titball R.W."/>
            <person name="Rood J.I."/>
            <person name="Melville S.B."/>
            <person name="Paulsen I.T."/>
        </authorList>
    </citation>
    <scope>NUCLEOTIDE SEQUENCE [LARGE SCALE GENOMIC DNA]</scope>
    <source>
        <strain>SM101 / Type A</strain>
    </source>
</reference>
<evidence type="ECO:0000255" key="1">
    <source>
        <dbReference type="HAMAP-Rule" id="MF_01131"/>
    </source>
</evidence>
<name>REX_CLOPS</name>